<organism>
    <name type="scientific">Brucella melitensis biotype 2 (strain ATCC 23457)</name>
    <dbReference type="NCBI Taxonomy" id="546272"/>
    <lineage>
        <taxon>Bacteria</taxon>
        <taxon>Pseudomonadati</taxon>
        <taxon>Pseudomonadota</taxon>
        <taxon>Alphaproteobacteria</taxon>
        <taxon>Hyphomicrobiales</taxon>
        <taxon>Brucellaceae</taxon>
        <taxon>Brucella/Ochrobactrum group</taxon>
        <taxon>Brucella</taxon>
    </lineage>
</organism>
<gene>
    <name evidence="1" type="primary">rlmE</name>
    <name evidence="1" type="synonym">ftsJ</name>
    <name evidence="1" type="synonym">rrmJ</name>
    <name type="ordered locus">BMEA_B0657</name>
</gene>
<proteinExistence type="inferred from homology"/>
<protein>
    <recommendedName>
        <fullName evidence="1">Ribosomal RNA large subunit methyltransferase E</fullName>
        <ecNumber evidence="1">2.1.1.166</ecNumber>
    </recommendedName>
    <alternativeName>
        <fullName evidence="1">23S rRNA Um2552 methyltransferase</fullName>
    </alternativeName>
    <alternativeName>
        <fullName evidence="1">rRNA (uridine-2'-O-)-methyltransferase</fullName>
    </alternativeName>
</protein>
<evidence type="ECO:0000255" key="1">
    <source>
        <dbReference type="HAMAP-Rule" id="MF_01547"/>
    </source>
</evidence>
<evidence type="ECO:0000256" key="2">
    <source>
        <dbReference type="SAM" id="MobiDB-lite"/>
    </source>
</evidence>
<accession>C0RLJ5</accession>
<reference key="1">
    <citation type="submission" date="2009-03" db="EMBL/GenBank/DDBJ databases">
        <title>Brucella melitensis ATCC 23457 whole genome shotgun sequencing project.</title>
        <authorList>
            <person name="Setubal J.C."/>
            <person name="Boyle S."/>
            <person name="Crasta O.R."/>
            <person name="Gillespie J.J."/>
            <person name="Kenyon R.W."/>
            <person name="Lu J."/>
            <person name="Mane S."/>
            <person name="Nagrani S."/>
            <person name="Shallom J.M."/>
            <person name="Shallom S."/>
            <person name="Shukla M."/>
            <person name="Snyder E.E."/>
            <person name="Sobral B.W."/>
            <person name="Wattam A.R."/>
            <person name="Will R."/>
            <person name="Williams K."/>
            <person name="Yoo H."/>
            <person name="Munk C."/>
            <person name="Tapia R."/>
            <person name="Han C."/>
            <person name="Detter J.C."/>
            <person name="Bruce D."/>
            <person name="Brettin T.S."/>
        </authorList>
    </citation>
    <scope>NUCLEOTIDE SEQUENCE [LARGE SCALE GENOMIC DNA]</scope>
    <source>
        <strain>ATCC 23457</strain>
    </source>
</reference>
<dbReference type="EC" id="2.1.1.166" evidence="1"/>
<dbReference type="EMBL" id="CP001489">
    <property type="protein sequence ID" value="ACO02478.1"/>
    <property type="molecule type" value="Genomic_DNA"/>
</dbReference>
<dbReference type="RefSeq" id="WP_002965955.1">
    <property type="nucleotide sequence ID" value="NC_012442.1"/>
</dbReference>
<dbReference type="SMR" id="C0RLJ5"/>
<dbReference type="KEGG" id="bmi:BMEA_B0657"/>
<dbReference type="HOGENOM" id="CLU_009422_4_0_5"/>
<dbReference type="Proteomes" id="UP000001748">
    <property type="component" value="Chromosome II"/>
</dbReference>
<dbReference type="GO" id="GO:0005737">
    <property type="term" value="C:cytoplasm"/>
    <property type="evidence" value="ECO:0007669"/>
    <property type="project" value="UniProtKB-SubCell"/>
</dbReference>
<dbReference type="GO" id="GO:0008650">
    <property type="term" value="F:rRNA (uridine-2'-O-)-methyltransferase activity"/>
    <property type="evidence" value="ECO:0007669"/>
    <property type="project" value="UniProtKB-UniRule"/>
</dbReference>
<dbReference type="Gene3D" id="3.40.50.150">
    <property type="entry name" value="Vaccinia Virus protein VP39"/>
    <property type="match status" value="1"/>
</dbReference>
<dbReference type="HAMAP" id="MF_01547">
    <property type="entry name" value="RNA_methyltr_E"/>
    <property type="match status" value="1"/>
</dbReference>
<dbReference type="InterPro" id="IPR050082">
    <property type="entry name" value="RNA_methyltr_RlmE"/>
</dbReference>
<dbReference type="InterPro" id="IPR002877">
    <property type="entry name" value="RNA_MeTrfase_FtsJ_dom"/>
</dbReference>
<dbReference type="InterPro" id="IPR015507">
    <property type="entry name" value="rRNA-MeTfrase_E"/>
</dbReference>
<dbReference type="InterPro" id="IPR029063">
    <property type="entry name" value="SAM-dependent_MTases_sf"/>
</dbReference>
<dbReference type="PANTHER" id="PTHR10920">
    <property type="entry name" value="RIBOSOMAL RNA METHYLTRANSFERASE"/>
    <property type="match status" value="1"/>
</dbReference>
<dbReference type="PANTHER" id="PTHR10920:SF18">
    <property type="entry name" value="RRNA METHYLTRANSFERASE 2, MITOCHONDRIAL"/>
    <property type="match status" value="1"/>
</dbReference>
<dbReference type="Pfam" id="PF01728">
    <property type="entry name" value="FtsJ"/>
    <property type="match status" value="1"/>
</dbReference>
<dbReference type="PIRSF" id="PIRSF005461">
    <property type="entry name" value="23S_rRNA_mtase"/>
    <property type="match status" value="1"/>
</dbReference>
<dbReference type="SUPFAM" id="SSF53335">
    <property type="entry name" value="S-adenosyl-L-methionine-dependent methyltransferases"/>
    <property type="match status" value="1"/>
</dbReference>
<name>RLME_BRUMB</name>
<comment type="function">
    <text evidence="1">Specifically methylates the uridine in position 2552 of 23S rRNA at the 2'-O position of the ribose in the fully assembled 50S ribosomal subunit.</text>
</comment>
<comment type="catalytic activity">
    <reaction evidence="1">
        <text>uridine(2552) in 23S rRNA + S-adenosyl-L-methionine = 2'-O-methyluridine(2552) in 23S rRNA + S-adenosyl-L-homocysteine + H(+)</text>
        <dbReference type="Rhea" id="RHEA:42720"/>
        <dbReference type="Rhea" id="RHEA-COMP:10202"/>
        <dbReference type="Rhea" id="RHEA-COMP:10203"/>
        <dbReference type="ChEBI" id="CHEBI:15378"/>
        <dbReference type="ChEBI" id="CHEBI:57856"/>
        <dbReference type="ChEBI" id="CHEBI:59789"/>
        <dbReference type="ChEBI" id="CHEBI:65315"/>
        <dbReference type="ChEBI" id="CHEBI:74478"/>
        <dbReference type="EC" id="2.1.1.166"/>
    </reaction>
</comment>
<comment type="subcellular location">
    <subcellularLocation>
        <location evidence="1">Cytoplasm</location>
    </subcellularLocation>
</comment>
<comment type="similarity">
    <text evidence="1">Belongs to the class I-like SAM-binding methyltransferase superfamily. RNA methyltransferase RlmE family.</text>
</comment>
<keyword id="KW-0963">Cytoplasm</keyword>
<keyword id="KW-0489">Methyltransferase</keyword>
<keyword id="KW-0698">rRNA processing</keyword>
<keyword id="KW-0949">S-adenosyl-L-methionine</keyword>
<keyword id="KW-0808">Transferase</keyword>
<feature type="chain" id="PRO_1000185291" description="Ribosomal RNA large subunit methyltransferase E">
    <location>
        <begin position="1"/>
        <end position="240"/>
    </location>
</feature>
<feature type="region of interest" description="Disordered" evidence="2">
    <location>
        <begin position="1"/>
        <end position="33"/>
    </location>
</feature>
<feature type="compositionally biased region" description="Gly residues" evidence="2">
    <location>
        <begin position="1"/>
        <end position="20"/>
    </location>
</feature>
<feature type="active site" description="Proton acceptor" evidence="1">
    <location>
        <position position="195"/>
    </location>
</feature>
<feature type="binding site" evidence="1">
    <location>
        <position position="92"/>
    </location>
    <ligand>
        <name>S-adenosyl-L-methionine</name>
        <dbReference type="ChEBI" id="CHEBI:59789"/>
    </ligand>
</feature>
<feature type="binding site" evidence="1">
    <location>
        <position position="94"/>
    </location>
    <ligand>
        <name>S-adenosyl-L-methionine</name>
        <dbReference type="ChEBI" id="CHEBI:59789"/>
    </ligand>
</feature>
<feature type="binding site" evidence="1">
    <location>
        <position position="115"/>
    </location>
    <ligand>
        <name>S-adenosyl-L-methionine</name>
        <dbReference type="ChEBI" id="CHEBI:59789"/>
    </ligand>
</feature>
<feature type="binding site" evidence="1">
    <location>
        <position position="131"/>
    </location>
    <ligand>
        <name>S-adenosyl-L-methionine</name>
        <dbReference type="ChEBI" id="CHEBI:59789"/>
    </ligand>
</feature>
<feature type="binding site" evidence="1">
    <location>
        <position position="155"/>
    </location>
    <ligand>
        <name>S-adenosyl-L-methionine</name>
        <dbReference type="ChEBI" id="CHEBI:59789"/>
    </ligand>
</feature>
<sequence>MSKAGGNKGGSRTGGRGGAGSSNLHVRVKKKAGTIKESSRRWLERHLNDPYVHKSRQDGYRSRAAYKLIEINDRYNLLKKGQKIIDLGAAPGGWSQIAARIVGSTDENPQVVGIDYLHVDPLPGVILLEMDFLDDEAPQKLMDALGDKPDLVISDMAAPTTGHRRTDHLRTVHLCEVAADFAVSVLKPGGHFLTKTFQGGTENELLALLKQKFRSVHHVKPPASRAESVELYLLARDFKG</sequence>